<reference key="1">
    <citation type="journal article" date="1993" name="J. Bacteriol.">
        <title>Sequencing and characterization of a gene cluster encoding the enzymes for L-rhamnose metabolism in Escherichia coli.</title>
        <authorList>
            <person name="Moralejo P."/>
            <person name="Egan S.M."/>
            <person name="Hidalgo E.F."/>
            <person name="Aguilar J."/>
        </authorList>
    </citation>
    <scope>NUCLEOTIDE SEQUENCE [GENOMIC DNA]</scope>
    <source>
        <strain>K12</strain>
    </source>
</reference>
<reference key="2">
    <citation type="journal article" date="1993" name="Nucleic Acids Res.">
        <title>Analysis of the Escherichia coli genome. III. DNA sequence of the region from 87.2 to 89.2 minutes.</title>
        <authorList>
            <person name="Plunkett G. III"/>
            <person name="Burland V."/>
            <person name="Daniels D.L."/>
            <person name="Blattner F.R."/>
        </authorList>
    </citation>
    <scope>NUCLEOTIDE SEQUENCE [LARGE SCALE GENOMIC DNA]</scope>
    <source>
        <strain>K12 / MG1655 / ATCC 47076</strain>
    </source>
</reference>
<reference key="3">
    <citation type="journal article" date="1997" name="Science">
        <title>The complete genome sequence of Escherichia coli K-12.</title>
        <authorList>
            <person name="Blattner F.R."/>
            <person name="Plunkett G. III"/>
            <person name="Bloch C.A."/>
            <person name="Perna N.T."/>
            <person name="Burland V."/>
            <person name="Riley M."/>
            <person name="Collado-Vides J."/>
            <person name="Glasner J.D."/>
            <person name="Rode C.K."/>
            <person name="Mayhew G.F."/>
            <person name="Gregor J."/>
            <person name="Davis N.W."/>
            <person name="Kirkpatrick H.A."/>
            <person name="Goeden M.A."/>
            <person name="Rose D.J."/>
            <person name="Mau B."/>
            <person name="Shao Y."/>
        </authorList>
    </citation>
    <scope>NUCLEOTIDE SEQUENCE [LARGE SCALE GENOMIC DNA]</scope>
    <source>
        <strain>K12 / MG1655 / ATCC 47076</strain>
    </source>
</reference>
<reference key="4">
    <citation type="journal article" date="2006" name="Mol. Syst. Biol.">
        <title>Highly accurate genome sequences of Escherichia coli K-12 strains MG1655 and W3110.</title>
        <authorList>
            <person name="Hayashi K."/>
            <person name="Morooka N."/>
            <person name="Yamamoto Y."/>
            <person name="Fujita K."/>
            <person name="Isono K."/>
            <person name="Choi S."/>
            <person name="Ohtsubo E."/>
            <person name="Baba T."/>
            <person name="Wanner B.L."/>
            <person name="Mori H."/>
            <person name="Horiuchi T."/>
        </authorList>
    </citation>
    <scope>NUCLEOTIDE SEQUENCE [LARGE SCALE GENOMIC DNA]</scope>
    <source>
        <strain>K12 / W3110 / ATCC 27325 / DSM 5911</strain>
    </source>
</reference>
<reference key="5">
    <citation type="journal article" date="1993" name="J. Mol. Biol.">
        <title>A regulatory cascade in the induction of rhaBAD.</title>
        <authorList>
            <person name="Egan S.M."/>
            <person name="Schleif R.F."/>
        </authorList>
    </citation>
    <scope>INDUCTION</scope>
    <source>
        <strain>ECL116</strain>
    </source>
</reference>
<reference key="6">
    <citation type="journal article" date="1997" name="Electrophoresis">
        <title>Escherichia coli proteome analysis using the gene-protein database.</title>
        <authorList>
            <person name="VanBogelen R.A."/>
            <person name="Abshire K.Z."/>
            <person name="Moldover B."/>
            <person name="Olson E.R."/>
            <person name="Neidhardt F.C."/>
        </authorList>
    </citation>
    <scope>IDENTIFICATION BY 2D-GEL</scope>
</reference>
<reference key="7">
    <citation type="journal article" date="2000" name="J. Bacteriol.">
        <title>Roles of cyclic AMP receptor protein and the carboxyl-terminal domain of the alpha subunit in transcription activation of the Escherichia coli rhaBAD operon.</title>
        <authorList>
            <person name="Holcroft C.C."/>
            <person name="Egan S.M."/>
        </authorList>
    </citation>
    <scope>INDUCTION</scope>
</reference>
<reference key="8">
    <citation type="journal article" date="2015" name="Proc. Natl. Acad. Sci. U.S.A.">
        <title>Panoramic view of a superfamily of phosphatases through substrate profiling.</title>
        <authorList>
            <person name="Huang H."/>
            <person name="Pandya C."/>
            <person name="Liu C."/>
            <person name="Al-Obaidi N.F."/>
            <person name="Wang M."/>
            <person name="Zheng L."/>
            <person name="Toews Keating S."/>
            <person name="Aono M."/>
            <person name="Love J.D."/>
            <person name="Evans B."/>
            <person name="Seidel R.D."/>
            <person name="Hillerich B.S."/>
            <person name="Garforth S.J."/>
            <person name="Almo S.C."/>
            <person name="Mariano P.S."/>
            <person name="Dunaway-Mariano D."/>
            <person name="Allen K.N."/>
            <person name="Farelli J.D."/>
        </authorList>
    </citation>
    <scope>FUNCTION</scope>
</reference>
<reference key="9">
    <citation type="journal article" date="2002" name="Acta Crystallogr. D">
        <title>The structure of L-rhamnulose-1-phosphate aldolase (class II) solved by low-resolution SIR phasing and 20-fold NCS averaging.</title>
        <authorList>
            <person name="Kroemer M."/>
            <person name="Schulz G.E."/>
        </authorList>
    </citation>
    <scope>X-RAY CRYSTALLOGRAPHY (2.7 ANGSTROMS) IN COMPLEX WITH ZINC</scope>
    <scope>COFACTOR</scope>
    <scope>SUBUNIT</scope>
    <scope>ACTIVE SITE</scope>
</reference>
<reference key="10">
    <citation type="journal article" date="2003" name="Biochemistry">
        <title>Structure and catalytic mechanism of L-rhamnulose-1-phosphate aldolase.</title>
        <authorList>
            <person name="Kroemer M."/>
            <person name="Merkel I."/>
            <person name="Schulz G.E."/>
        </authorList>
    </citation>
    <scope>X-RAY CRYSTALLOGRAPHY (2.7 ANGSTROMS) IN COMPLEX WITH ZINC</scope>
    <scope>FUNCTION</scope>
    <scope>CATALYTIC ACTIVITY</scope>
    <scope>COFACTOR</scope>
    <scope>BIOPHYSICOCHEMICAL PROPERTIES</scope>
    <scope>ACTIVE SITE</scope>
    <scope>MUTAGENESIS OF ARG-28; ASN-29; GLU-117; GLU-171 AND GLU-192</scope>
</reference>
<proteinExistence type="evidence at protein level"/>
<comment type="function">
    <text evidence="3 4">Catalyzes the reversible cleavage of L-rhamnulose-1-phosphate to dihydroxyacetone phosphate (DHAP) and L-lactaldehyde (PubMed:12962479). Also catalyzes the dephosphorylation of phospho-serine in vitro (PubMed:25848029).</text>
</comment>
<comment type="catalytic activity">
    <reaction evidence="3">
        <text>L-rhamnulose 1-phosphate = (S)-lactaldehyde + dihydroxyacetone phosphate</text>
        <dbReference type="Rhea" id="RHEA:19689"/>
        <dbReference type="ChEBI" id="CHEBI:18041"/>
        <dbReference type="ChEBI" id="CHEBI:57642"/>
        <dbReference type="ChEBI" id="CHEBI:58313"/>
        <dbReference type="EC" id="4.1.2.19"/>
    </reaction>
</comment>
<comment type="cofactor">
    <cofactor evidence="2 3">
        <name>Zn(2+)</name>
        <dbReference type="ChEBI" id="CHEBI:29105"/>
    </cofactor>
    <text evidence="2 3">Binds 1 zinc ion per subunit.</text>
</comment>
<comment type="biophysicochemical properties">
    <kinetics>
        <KM evidence="3">0.48 mM for L-rhamnulose 1-phosphate (at 37 degrees Celsius)</KM>
    </kinetics>
</comment>
<comment type="pathway">
    <text>Carbohydrate degradation; L-rhamnose degradation; glycerone phosphate from L-rhamnose: step 3/3.</text>
</comment>
<comment type="subunit">
    <text evidence="2">Homotetramer.</text>
</comment>
<comment type="subcellular location">
    <subcellularLocation>
        <location>Cytoplasm</location>
    </subcellularLocation>
</comment>
<comment type="induction">
    <text evidence="1 5">Induced by L-rhamnose via the RhaR-RhaS regulatory cascade. Binding of the cAMP receptor protein (CRP) is required for full expression.</text>
</comment>
<comment type="similarity">
    <text evidence="6">Belongs to the aldolase class II family. RhaD subfamily.</text>
</comment>
<name>RHAD_ECOLI</name>
<sequence>MQNITQSWFVQGMIKATTDAWLKGWDERNGGNLTLRLDDADIAPYHDNFHQQPRYIPLSQPMPLLANTPFIVTGSGKFFRNVQLDPAANLGIVKVDSDGAGYHILWGLTNEAVPTSELPAHFLSHCERIKATNGKDRVIMHCHATNLIALTYVLENDTAVFTRQLWEGSTECLVVFPDGVGILPWMVPGTDEIGQATAQEMQKHSLVLWPFHGVFGSGPTLDETFGLIDTAEKSAQVLVKVYSMGGMKQTISREELIALGKRFGVTPLASALAL</sequence>
<gene>
    <name type="primary">rhaD</name>
    <name type="synonym">rhuA</name>
    <name type="ordered locus">b3902</name>
    <name type="ordered locus">JW3873</name>
</gene>
<dbReference type="EC" id="4.1.2.19" evidence="3"/>
<dbReference type="EMBL" id="X60472">
    <property type="protein sequence ID" value="CAA43003.1"/>
    <property type="molecule type" value="Genomic_DNA"/>
</dbReference>
<dbReference type="EMBL" id="L19201">
    <property type="protein sequence ID" value="AAB03035.1"/>
    <property type="molecule type" value="Genomic_DNA"/>
</dbReference>
<dbReference type="EMBL" id="U00096">
    <property type="protein sequence ID" value="AAC76884.1"/>
    <property type="molecule type" value="Genomic_DNA"/>
</dbReference>
<dbReference type="EMBL" id="AP009048">
    <property type="protein sequence ID" value="BAE77407.1"/>
    <property type="molecule type" value="Genomic_DNA"/>
</dbReference>
<dbReference type="PIR" id="C48649">
    <property type="entry name" value="C48649"/>
</dbReference>
<dbReference type="RefSeq" id="NP_418338.1">
    <property type="nucleotide sequence ID" value="NC_000913.3"/>
</dbReference>
<dbReference type="RefSeq" id="WP_001179745.1">
    <property type="nucleotide sequence ID" value="NZ_LN832404.1"/>
</dbReference>
<dbReference type="PDB" id="1GT7">
    <property type="method" value="X-ray"/>
    <property type="resolution" value="2.70 A"/>
    <property type="chains" value="A/B/C/D/E/F/G/H/I/J/K/L/M/N/O/P/Q/R/S/T=1-274"/>
</dbReference>
<dbReference type="PDB" id="1OJR">
    <property type="method" value="X-ray"/>
    <property type="resolution" value="1.35 A"/>
    <property type="chains" value="A=1-274"/>
</dbReference>
<dbReference type="PDB" id="2UYU">
    <property type="method" value="X-ray"/>
    <property type="resolution" value="1.96 A"/>
    <property type="chains" value="A/E=1-274"/>
</dbReference>
<dbReference type="PDB" id="2UYV">
    <property type="method" value="X-ray"/>
    <property type="resolution" value="2.20 A"/>
    <property type="chains" value="A/B/C/D=1-274"/>
</dbReference>
<dbReference type="PDB" id="2V29">
    <property type="method" value="X-ray"/>
    <property type="resolution" value="2.03 A"/>
    <property type="chains" value="A/B=1-274"/>
</dbReference>
<dbReference type="PDB" id="2V2A">
    <property type="method" value="X-ray"/>
    <property type="resolution" value="1.75 A"/>
    <property type="chains" value="A=1-274"/>
</dbReference>
<dbReference type="PDB" id="2V2B">
    <property type="method" value="X-ray"/>
    <property type="resolution" value="1.50 A"/>
    <property type="chains" value="A=1-274"/>
</dbReference>
<dbReference type="PDB" id="2V9E">
    <property type="method" value="X-ray"/>
    <property type="resolution" value="1.58 A"/>
    <property type="chains" value="A/B=1-272"/>
</dbReference>
<dbReference type="PDB" id="2V9F">
    <property type="method" value="X-ray"/>
    <property type="resolution" value="2.10 A"/>
    <property type="chains" value="A=1-272"/>
</dbReference>
<dbReference type="PDB" id="2V9G">
    <property type="method" value="X-ray"/>
    <property type="resolution" value="2.70 A"/>
    <property type="chains" value="A/B/C/D=1-274"/>
</dbReference>
<dbReference type="PDB" id="2V9I">
    <property type="method" value="X-ray"/>
    <property type="resolution" value="1.80 A"/>
    <property type="chains" value="A/B=1-273"/>
</dbReference>
<dbReference type="PDB" id="2V9L">
    <property type="method" value="X-ray"/>
    <property type="resolution" value="1.23 A"/>
    <property type="chains" value="A=1-274"/>
</dbReference>
<dbReference type="PDB" id="2V9M">
    <property type="method" value="X-ray"/>
    <property type="resolution" value="1.30 A"/>
    <property type="chains" value="A/B=1-274"/>
</dbReference>
<dbReference type="PDB" id="2V9N">
    <property type="method" value="X-ray"/>
    <property type="resolution" value="1.40 A"/>
    <property type="chains" value="A/B/C/D=1-274"/>
</dbReference>
<dbReference type="PDB" id="2V9O">
    <property type="method" value="X-ray"/>
    <property type="resolution" value="1.95 A"/>
    <property type="chains" value="A/E=1-274"/>
</dbReference>
<dbReference type="PDBsum" id="1GT7"/>
<dbReference type="PDBsum" id="1OJR"/>
<dbReference type="PDBsum" id="2UYU"/>
<dbReference type="PDBsum" id="2UYV"/>
<dbReference type="PDBsum" id="2V29"/>
<dbReference type="PDBsum" id="2V2A"/>
<dbReference type="PDBsum" id="2V2B"/>
<dbReference type="PDBsum" id="2V9E"/>
<dbReference type="PDBsum" id="2V9F"/>
<dbReference type="PDBsum" id="2V9G"/>
<dbReference type="PDBsum" id="2V9I"/>
<dbReference type="PDBsum" id="2V9L"/>
<dbReference type="PDBsum" id="2V9M"/>
<dbReference type="PDBsum" id="2V9N"/>
<dbReference type="PDBsum" id="2V9O"/>
<dbReference type="SMR" id="P32169"/>
<dbReference type="BioGRID" id="4260676">
    <property type="interactions" value="8"/>
</dbReference>
<dbReference type="FunCoup" id="P32169">
    <property type="interactions" value="124"/>
</dbReference>
<dbReference type="IntAct" id="P32169">
    <property type="interactions" value="7"/>
</dbReference>
<dbReference type="STRING" id="511145.b3902"/>
<dbReference type="DrugBank" id="DB03026">
    <property type="generic name" value="Phosphoglycolohydroxamic Acid"/>
</dbReference>
<dbReference type="PaxDb" id="511145-b3902"/>
<dbReference type="EnsemblBacteria" id="AAC76884">
    <property type="protein sequence ID" value="AAC76884"/>
    <property type="gene ID" value="b3902"/>
</dbReference>
<dbReference type="GeneID" id="948401"/>
<dbReference type="KEGG" id="ecj:JW3873"/>
<dbReference type="KEGG" id="eco:b3902"/>
<dbReference type="KEGG" id="ecoc:C3026_21095"/>
<dbReference type="PATRIC" id="fig|1411691.4.peg.2804"/>
<dbReference type="EchoBASE" id="EB1812"/>
<dbReference type="eggNOG" id="COG0235">
    <property type="taxonomic scope" value="Bacteria"/>
</dbReference>
<dbReference type="HOGENOM" id="CLU_076831_0_0_6"/>
<dbReference type="InParanoid" id="P32169"/>
<dbReference type="OMA" id="SHFMSHI"/>
<dbReference type="OrthoDB" id="9784634at2"/>
<dbReference type="PhylomeDB" id="P32169"/>
<dbReference type="BioCyc" id="EcoCyc:RHAMNULPALDOL-MONOMER"/>
<dbReference type="BioCyc" id="MetaCyc:RHAMNULPALDOL-MONOMER"/>
<dbReference type="BRENDA" id="4.1.2.19">
    <property type="organism ID" value="2026"/>
</dbReference>
<dbReference type="SABIO-RK" id="P32169"/>
<dbReference type="UniPathway" id="UPA00541">
    <property type="reaction ID" value="UER00603"/>
</dbReference>
<dbReference type="EvolutionaryTrace" id="P32169"/>
<dbReference type="PRO" id="PR:P32169"/>
<dbReference type="Proteomes" id="UP000000625">
    <property type="component" value="Chromosome"/>
</dbReference>
<dbReference type="GO" id="GO:0005829">
    <property type="term" value="C:cytosol"/>
    <property type="evidence" value="ECO:0000318"/>
    <property type="project" value="GO_Central"/>
</dbReference>
<dbReference type="GO" id="GO:0016832">
    <property type="term" value="F:aldehyde-lyase activity"/>
    <property type="evidence" value="ECO:0000318"/>
    <property type="project" value="GO_Central"/>
</dbReference>
<dbReference type="GO" id="GO:0042802">
    <property type="term" value="F:identical protein binding"/>
    <property type="evidence" value="ECO:0000314"/>
    <property type="project" value="EcoCyc"/>
</dbReference>
<dbReference type="GO" id="GO:0046872">
    <property type="term" value="F:metal ion binding"/>
    <property type="evidence" value="ECO:0007669"/>
    <property type="project" value="UniProtKB-KW"/>
</dbReference>
<dbReference type="GO" id="GO:0008994">
    <property type="term" value="F:rhamnulose-1-phosphate aldolase activity"/>
    <property type="evidence" value="ECO:0000314"/>
    <property type="project" value="EcoCyc"/>
</dbReference>
<dbReference type="GO" id="GO:0019323">
    <property type="term" value="P:pentose catabolic process"/>
    <property type="evidence" value="ECO:0000318"/>
    <property type="project" value="GO_Central"/>
</dbReference>
<dbReference type="GO" id="GO:0019301">
    <property type="term" value="P:rhamnose catabolic process"/>
    <property type="evidence" value="ECO:0000315"/>
    <property type="project" value="EcoCyc"/>
</dbReference>
<dbReference type="CDD" id="cd00398">
    <property type="entry name" value="Aldolase_II"/>
    <property type="match status" value="1"/>
</dbReference>
<dbReference type="FunFam" id="3.40.225.10:FF:000006">
    <property type="entry name" value="Rhamnulose-1-phosphate aldolase"/>
    <property type="match status" value="1"/>
</dbReference>
<dbReference type="Gene3D" id="3.40.225.10">
    <property type="entry name" value="Class II aldolase/adducin N-terminal domain"/>
    <property type="match status" value="1"/>
</dbReference>
<dbReference type="HAMAP" id="MF_00770">
    <property type="entry name" value="RhaD"/>
    <property type="match status" value="1"/>
</dbReference>
<dbReference type="InterPro" id="IPR050197">
    <property type="entry name" value="Aldolase_class_II_sugar_metab"/>
</dbReference>
<dbReference type="InterPro" id="IPR001303">
    <property type="entry name" value="Aldolase_II/adducin_N"/>
</dbReference>
<dbReference type="InterPro" id="IPR036409">
    <property type="entry name" value="Aldolase_II/adducin_N_sf"/>
</dbReference>
<dbReference type="InterPro" id="IPR013447">
    <property type="entry name" value="Rhamnulose-1-P_Aldolase"/>
</dbReference>
<dbReference type="NCBIfam" id="NF002963">
    <property type="entry name" value="PRK03634.1"/>
    <property type="match status" value="1"/>
</dbReference>
<dbReference type="NCBIfam" id="TIGR02624">
    <property type="entry name" value="rhamnu_1P_ald"/>
    <property type="match status" value="1"/>
</dbReference>
<dbReference type="PANTHER" id="PTHR22789">
    <property type="entry name" value="FUCULOSE PHOSPHATE ALDOLASE"/>
    <property type="match status" value="1"/>
</dbReference>
<dbReference type="PANTHER" id="PTHR22789:SF16">
    <property type="entry name" value="RHAMNULOSE-1-PHOSPHATE ALDOLASE"/>
    <property type="match status" value="1"/>
</dbReference>
<dbReference type="Pfam" id="PF00596">
    <property type="entry name" value="Aldolase_II"/>
    <property type="match status" value="1"/>
</dbReference>
<dbReference type="SMART" id="SM01007">
    <property type="entry name" value="Aldolase_II"/>
    <property type="match status" value="1"/>
</dbReference>
<dbReference type="SUPFAM" id="SSF53639">
    <property type="entry name" value="AraD/HMP-PK domain-like"/>
    <property type="match status" value="1"/>
</dbReference>
<evidence type="ECO:0000269" key="1">
    <source>
    </source>
</evidence>
<evidence type="ECO:0000269" key="2">
    <source>
    </source>
</evidence>
<evidence type="ECO:0000269" key="3">
    <source>
    </source>
</evidence>
<evidence type="ECO:0000269" key="4">
    <source>
    </source>
</evidence>
<evidence type="ECO:0000269" key="5">
    <source>
    </source>
</evidence>
<evidence type="ECO:0000305" key="6"/>
<evidence type="ECO:0007829" key="7">
    <source>
        <dbReference type="PDB" id="2V9L"/>
    </source>
</evidence>
<evidence type="ECO:0007829" key="8">
    <source>
        <dbReference type="PDB" id="2V9M"/>
    </source>
</evidence>
<protein>
    <recommendedName>
        <fullName>Rhamnulose-1-phosphate aldolase</fullName>
        <ecNumber evidence="3">4.1.2.19</ecNumber>
    </recommendedName>
</protein>
<keyword id="KW-0002">3D-structure</keyword>
<keyword id="KW-0963">Cytoplasm</keyword>
<keyword id="KW-0456">Lyase</keyword>
<keyword id="KW-0479">Metal-binding</keyword>
<keyword id="KW-1185">Reference proteome</keyword>
<keyword id="KW-0684">Rhamnose metabolism</keyword>
<keyword id="KW-0862">Zinc</keyword>
<organism>
    <name type="scientific">Escherichia coli (strain K12)</name>
    <dbReference type="NCBI Taxonomy" id="83333"/>
    <lineage>
        <taxon>Bacteria</taxon>
        <taxon>Pseudomonadati</taxon>
        <taxon>Pseudomonadota</taxon>
        <taxon>Gammaproteobacteria</taxon>
        <taxon>Enterobacterales</taxon>
        <taxon>Enterobacteriaceae</taxon>
        <taxon>Escherichia</taxon>
    </lineage>
</organism>
<feature type="chain" id="PRO_0000209657" description="Rhamnulose-1-phosphate aldolase">
    <location>
        <begin position="1"/>
        <end position="274"/>
    </location>
</feature>
<feature type="active site" evidence="2 3">
    <location>
        <position position="117"/>
    </location>
</feature>
<feature type="binding site" evidence="2 3">
    <location>
        <position position="141"/>
    </location>
    <ligand>
        <name>Zn(2+)</name>
        <dbReference type="ChEBI" id="CHEBI:29105"/>
    </ligand>
</feature>
<feature type="binding site" evidence="2 3">
    <location>
        <position position="143"/>
    </location>
    <ligand>
        <name>Zn(2+)</name>
        <dbReference type="ChEBI" id="CHEBI:29105"/>
    </ligand>
</feature>
<feature type="binding site" evidence="2 3">
    <location>
        <position position="212"/>
    </location>
    <ligand>
        <name>Zn(2+)</name>
        <dbReference type="ChEBI" id="CHEBI:29105"/>
    </ligand>
</feature>
<feature type="mutagenesis site" description="Severe loss of enzymatic activity." evidence="3">
    <original>R</original>
    <variation>A</variation>
    <variation>S</variation>
    <location>
        <position position="28"/>
    </location>
</feature>
<feature type="mutagenesis site" description="Severe loss of enzymatic activity." evidence="3">
    <original>N</original>
    <variation>A</variation>
    <location>
        <position position="29"/>
    </location>
</feature>
<feature type="mutagenesis site" description="Loss of enzymatic activity." evidence="3">
    <original>E</original>
    <variation>Q</variation>
    <location>
        <position position="117"/>
    </location>
</feature>
<feature type="mutagenesis site" description="Loss of enzymatic activity." evidence="3">
    <original>E</original>
    <variation>S</variation>
    <variation>A</variation>
    <variation>Q</variation>
    <location>
        <position position="171"/>
    </location>
</feature>
<feature type="mutagenesis site" description="No effect on enzymatic activity." evidence="3">
    <original>E</original>
    <variation>A</variation>
    <location>
        <position position="192"/>
    </location>
</feature>
<feature type="helix" evidence="7">
    <location>
        <begin position="4"/>
        <end position="6"/>
    </location>
</feature>
<feature type="helix" evidence="7">
    <location>
        <begin position="8"/>
        <end position="22"/>
    </location>
</feature>
<feature type="strand" evidence="7">
    <location>
        <begin position="31"/>
        <end position="36"/>
    </location>
</feature>
<feature type="helix" evidence="7">
    <location>
        <begin position="39"/>
        <end position="42"/>
    </location>
</feature>
<feature type="helix" evidence="7">
    <location>
        <begin position="43"/>
        <end position="48"/>
    </location>
</feature>
<feature type="strand" evidence="7">
    <location>
        <begin position="54"/>
        <end position="57"/>
    </location>
</feature>
<feature type="helix" evidence="7">
    <location>
        <begin position="63"/>
        <end position="65"/>
    </location>
</feature>
<feature type="strand" evidence="7">
    <location>
        <begin position="69"/>
        <end position="74"/>
    </location>
</feature>
<feature type="helix" evidence="7">
    <location>
        <begin position="79"/>
        <end position="81"/>
    </location>
</feature>
<feature type="turn" evidence="7">
    <location>
        <begin position="82"/>
        <end position="84"/>
    </location>
</feature>
<feature type="helix" evidence="7">
    <location>
        <begin position="86"/>
        <end position="89"/>
    </location>
</feature>
<feature type="strand" evidence="7">
    <location>
        <begin position="90"/>
        <end position="95"/>
    </location>
</feature>
<feature type="strand" evidence="7">
    <location>
        <begin position="99"/>
        <end position="107"/>
    </location>
</feature>
<feature type="turn" evidence="7">
    <location>
        <begin position="109"/>
        <end position="111"/>
    </location>
</feature>
<feature type="helix" evidence="8">
    <location>
        <begin position="113"/>
        <end position="115"/>
    </location>
</feature>
<feature type="helix" evidence="7">
    <location>
        <begin position="118"/>
        <end position="131"/>
    </location>
</feature>
<feature type="turn" evidence="7">
    <location>
        <begin position="132"/>
        <end position="134"/>
    </location>
</feature>
<feature type="strand" evidence="7">
    <location>
        <begin position="138"/>
        <end position="142"/>
    </location>
</feature>
<feature type="helix" evidence="7">
    <location>
        <begin position="145"/>
        <end position="150"/>
    </location>
</feature>
<feature type="turn" evidence="7">
    <location>
        <begin position="151"/>
        <end position="153"/>
    </location>
</feature>
<feature type="helix" evidence="7">
    <location>
        <begin position="158"/>
        <end position="167"/>
    </location>
</feature>
<feature type="helix" evidence="7">
    <location>
        <begin position="172"/>
        <end position="175"/>
    </location>
</feature>
<feature type="strand" evidence="7">
    <location>
        <begin position="180"/>
        <end position="182"/>
    </location>
</feature>
<feature type="strand" evidence="7">
    <location>
        <begin position="188"/>
        <end position="190"/>
    </location>
</feature>
<feature type="helix" evidence="7">
    <location>
        <begin position="191"/>
        <end position="201"/>
    </location>
</feature>
<feature type="strand" evidence="7">
    <location>
        <begin position="205"/>
        <end position="209"/>
    </location>
</feature>
<feature type="turn" evidence="7">
    <location>
        <begin position="210"/>
        <end position="212"/>
    </location>
</feature>
<feature type="strand" evidence="7">
    <location>
        <begin position="213"/>
        <end position="220"/>
    </location>
</feature>
<feature type="helix" evidence="7">
    <location>
        <begin position="221"/>
        <end position="243"/>
    </location>
</feature>
<feature type="helix" evidence="7">
    <location>
        <begin position="256"/>
        <end position="263"/>
    </location>
</feature>
<feature type="helix" evidence="7">
    <location>
        <begin position="269"/>
        <end position="272"/>
    </location>
</feature>
<accession>P32169</accession>
<accession>Q2M8J9</accession>